<proteinExistence type="predicted"/>
<sequence length="130" mass="14855">MSSNSDNTECFGGVNYAEGMRKRKRNPVRNSTFQEYLDARNARYPRSGSTSDSDEDYTTRSKYESDVSEFKKMMDLETLPPPKAEPQAQKAEPDAAKEEPVSTTSYILNEWVAPMIGHFLAMCMYELLFK</sequence>
<dbReference type="EMBL" id="AY464052">
    <property type="protein sequence ID" value="AAS45963.1"/>
    <property type="molecule type" value="Genomic_DNA"/>
</dbReference>
<dbReference type="SMR" id="P84446"/>
<dbReference type="KEGG" id="vg:2948577"/>
<dbReference type="Proteomes" id="UP000008296">
    <property type="component" value="Segment"/>
</dbReference>
<name>VG75_EHV1V</name>
<accession>P84446</accession>
<accession>Q6S6V6</accession>
<reference evidence="2 3" key="1">
    <citation type="submission" date="2003-11" db="EMBL/GenBank/DDBJ databases">
        <authorList>
            <person name="Davis-Poynter N."/>
            <person name="Nugent J."/>
            <person name="Birch-Machin I."/>
            <person name="Allen G.P."/>
        </authorList>
    </citation>
    <scope>NUCLEOTIDE SEQUENCE [LARGE SCALE GENOMIC DNA]</scope>
</reference>
<protein>
    <recommendedName>
        <fullName>Uncharacterized gene 75 protein</fullName>
    </recommendedName>
</protein>
<feature type="chain" id="PRO_0000116173" description="Uncharacterized gene 75 protein">
    <location>
        <begin position="1"/>
        <end position="130"/>
    </location>
</feature>
<feature type="region of interest" description="Disordered" evidence="1">
    <location>
        <begin position="1"/>
        <end position="100"/>
    </location>
</feature>
<feature type="compositionally biased region" description="Basic and acidic residues" evidence="1">
    <location>
        <begin position="57"/>
        <end position="75"/>
    </location>
</feature>
<feature type="compositionally biased region" description="Basic and acidic residues" evidence="1">
    <location>
        <begin position="91"/>
        <end position="100"/>
    </location>
</feature>
<organismHost>
    <name type="scientific">Equus caballus</name>
    <name type="common">Horse</name>
    <dbReference type="NCBI Taxonomy" id="9796"/>
</organismHost>
<gene>
    <name type="ordered locus">75</name>
</gene>
<evidence type="ECO:0000256" key="1">
    <source>
        <dbReference type="SAM" id="MobiDB-lite"/>
    </source>
</evidence>
<evidence type="ECO:0000305" key="2"/>
<evidence type="ECO:0000312" key="3">
    <source>
        <dbReference type="EMBL" id="AAS45963.1"/>
    </source>
</evidence>
<organism>
    <name type="scientific">Equine herpesvirus 1 (strain V592)</name>
    <name type="common">EHV-1</name>
    <name type="synonym">Equine abortion virus</name>
    <dbReference type="NCBI Taxonomy" id="310273"/>
    <lineage>
        <taxon>Viruses</taxon>
        <taxon>Duplodnaviria</taxon>
        <taxon>Heunggongvirae</taxon>
        <taxon>Peploviricota</taxon>
        <taxon>Herviviricetes</taxon>
        <taxon>Herpesvirales</taxon>
        <taxon>Orthoherpesviridae</taxon>
        <taxon>Alphaherpesvirinae</taxon>
        <taxon>Varicellovirus</taxon>
        <taxon>Varicellovirus equidalpha1</taxon>
        <taxon>Equid alphaherpesvirus 1</taxon>
    </lineage>
</organism>